<dbReference type="EC" id="7.1.1.-" evidence="1"/>
<dbReference type="EMBL" id="CP000316">
    <property type="protein sequence ID" value="ABE45168.1"/>
    <property type="molecule type" value="Genomic_DNA"/>
</dbReference>
<dbReference type="RefSeq" id="WP_011484163.1">
    <property type="nucleotide sequence ID" value="NC_007948.1"/>
</dbReference>
<dbReference type="SMR" id="Q127X4"/>
<dbReference type="STRING" id="296591.Bpro_3254"/>
<dbReference type="KEGG" id="pol:Bpro_3254"/>
<dbReference type="eggNOG" id="COG0852">
    <property type="taxonomic scope" value="Bacteria"/>
</dbReference>
<dbReference type="HOGENOM" id="CLU_042628_2_1_4"/>
<dbReference type="OrthoDB" id="9803286at2"/>
<dbReference type="Proteomes" id="UP000001983">
    <property type="component" value="Chromosome"/>
</dbReference>
<dbReference type="GO" id="GO:0005886">
    <property type="term" value="C:plasma membrane"/>
    <property type="evidence" value="ECO:0007669"/>
    <property type="project" value="UniProtKB-SubCell"/>
</dbReference>
<dbReference type="GO" id="GO:0008137">
    <property type="term" value="F:NADH dehydrogenase (ubiquinone) activity"/>
    <property type="evidence" value="ECO:0007669"/>
    <property type="project" value="InterPro"/>
</dbReference>
<dbReference type="GO" id="GO:0050136">
    <property type="term" value="F:NADH:ubiquinone reductase (non-electrogenic) activity"/>
    <property type="evidence" value="ECO:0007669"/>
    <property type="project" value="UniProtKB-UniRule"/>
</dbReference>
<dbReference type="GO" id="GO:0048038">
    <property type="term" value="F:quinone binding"/>
    <property type="evidence" value="ECO:0007669"/>
    <property type="project" value="UniProtKB-KW"/>
</dbReference>
<dbReference type="Gene3D" id="3.30.460.80">
    <property type="entry name" value="NADH:ubiquinone oxidoreductase, 30kDa subunit"/>
    <property type="match status" value="1"/>
</dbReference>
<dbReference type="HAMAP" id="MF_01357">
    <property type="entry name" value="NDH1_NuoC"/>
    <property type="match status" value="1"/>
</dbReference>
<dbReference type="InterPro" id="IPR010218">
    <property type="entry name" value="NADH_DH_suC"/>
</dbReference>
<dbReference type="InterPro" id="IPR037232">
    <property type="entry name" value="NADH_quin_OxRdtase_su_C/D-like"/>
</dbReference>
<dbReference type="InterPro" id="IPR001268">
    <property type="entry name" value="NADH_UbQ_OxRdtase_30kDa_su"/>
</dbReference>
<dbReference type="InterPro" id="IPR020396">
    <property type="entry name" value="NADH_UbQ_OxRdtase_CS"/>
</dbReference>
<dbReference type="NCBIfam" id="TIGR01961">
    <property type="entry name" value="NuoC_fam"/>
    <property type="match status" value="1"/>
</dbReference>
<dbReference type="NCBIfam" id="NF004730">
    <property type="entry name" value="PRK06074.1-1"/>
    <property type="match status" value="1"/>
</dbReference>
<dbReference type="PANTHER" id="PTHR10884:SF14">
    <property type="entry name" value="NADH DEHYDROGENASE [UBIQUINONE] IRON-SULFUR PROTEIN 3, MITOCHONDRIAL"/>
    <property type="match status" value="1"/>
</dbReference>
<dbReference type="PANTHER" id="PTHR10884">
    <property type="entry name" value="NADH DEHYDROGENASE UBIQUINONE IRON-SULFUR PROTEIN 3"/>
    <property type="match status" value="1"/>
</dbReference>
<dbReference type="Pfam" id="PF00329">
    <property type="entry name" value="Complex1_30kDa"/>
    <property type="match status" value="1"/>
</dbReference>
<dbReference type="SUPFAM" id="SSF143243">
    <property type="entry name" value="Nqo5-like"/>
    <property type="match status" value="1"/>
</dbReference>
<dbReference type="PROSITE" id="PS00542">
    <property type="entry name" value="COMPLEX1_30K"/>
    <property type="match status" value="1"/>
</dbReference>
<evidence type="ECO:0000255" key="1">
    <source>
        <dbReference type="HAMAP-Rule" id="MF_01357"/>
    </source>
</evidence>
<proteinExistence type="inferred from homology"/>
<protein>
    <recommendedName>
        <fullName evidence="1">NADH-quinone oxidoreductase subunit C</fullName>
        <ecNumber evidence="1">7.1.1.-</ecNumber>
    </recommendedName>
    <alternativeName>
        <fullName evidence="1">NADH dehydrogenase I subunit C</fullName>
    </alternativeName>
    <alternativeName>
        <fullName evidence="1">NDH-1 subunit C</fullName>
    </alternativeName>
</protein>
<keyword id="KW-0997">Cell inner membrane</keyword>
<keyword id="KW-1003">Cell membrane</keyword>
<keyword id="KW-0472">Membrane</keyword>
<keyword id="KW-0520">NAD</keyword>
<keyword id="KW-0874">Quinone</keyword>
<keyword id="KW-1185">Reference proteome</keyword>
<keyword id="KW-1278">Translocase</keyword>
<keyword id="KW-0813">Transport</keyword>
<keyword id="KW-0830">Ubiquinone</keyword>
<sequence>MLSSFPVSATQLGDTIAAVLGDKVKSLKIALGEVTVTVGAADYLASAVLLRDAAGCRFEQLIDLCGLDYSEYKDGQYDGLRYCVASHLLSVSLNQRVRLKVFCPDDDFPVVDSVNGVWNSANWFEREAFDLYGIIFEGHNDLRRILTDYGFIGHPFRKDFPTTGYVEMRYDAEQKRVIYQPVTIEPREITPRVIREDNYGGLQ</sequence>
<feature type="chain" id="PRO_0000358161" description="NADH-quinone oxidoreductase subunit C">
    <location>
        <begin position="1"/>
        <end position="203"/>
    </location>
</feature>
<accession>Q127X4</accession>
<comment type="function">
    <text evidence="1">NDH-1 shuttles electrons from NADH, via FMN and iron-sulfur (Fe-S) centers, to quinones in the respiratory chain. The immediate electron acceptor for the enzyme in this species is believed to be ubiquinone. Couples the redox reaction to proton translocation (for every two electrons transferred, four hydrogen ions are translocated across the cytoplasmic membrane), and thus conserves the redox energy in a proton gradient.</text>
</comment>
<comment type="catalytic activity">
    <reaction evidence="1">
        <text>a quinone + NADH + 5 H(+)(in) = a quinol + NAD(+) + 4 H(+)(out)</text>
        <dbReference type="Rhea" id="RHEA:57888"/>
        <dbReference type="ChEBI" id="CHEBI:15378"/>
        <dbReference type="ChEBI" id="CHEBI:24646"/>
        <dbReference type="ChEBI" id="CHEBI:57540"/>
        <dbReference type="ChEBI" id="CHEBI:57945"/>
        <dbReference type="ChEBI" id="CHEBI:132124"/>
    </reaction>
</comment>
<comment type="subunit">
    <text evidence="1">NDH-1 is composed of 14 different subunits. Subunits NuoB, C, D, E, F, and G constitute the peripheral sector of the complex.</text>
</comment>
<comment type="subcellular location">
    <subcellularLocation>
        <location evidence="1">Cell inner membrane</location>
        <topology evidence="1">Peripheral membrane protein</topology>
        <orientation evidence="1">Cytoplasmic side</orientation>
    </subcellularLocation>
</comment>
<comment type="similarity">
    <text evidence="1">Belongs to the complex I 30 kDa subunit family.</text>
</comment>
<name>NUOC_POLSJ</name>
<reference key="1">
    <citation type="journal article" date="2008" name="Appl. Environ. Microbiol.">
        <title>The genome of Polaromonas sp. strain JS666: insights into the evolution of a hydrocarbon- and xenobiotic-degrading bacterium, and features of relevance to biotechnology.</title>
        <authorList>
            <person name="Mattes T.E."/>
            <person name="Alexander A.K."/>
            <person name="Richardson P.M."/>
            <person name="Munk A.C."/>
            <person name="Han C.S."/>
            <person name="Stothard P."/>
            <person name="Coleman N.V."/>
        </authorList>
    </citation>
    <scope>NUCLEOTIDE SEQUENCE [LARGE SCALE GENOMIC DNA]</scope>
    <source>
        <strain>JS666 / ATCC BAA-500</strain>
    </source>
</reference>
<gene>
    <name evidence="1" type="primary">nuoC</name>
    <name type="ordered locus">Bpro_3254</name>
</gene>
<organism>
    <name type="scientific">Polaromonas sp. (strain JS666 / ATCC BAA-500)</name>
    <dbReference type="NCBI Taxonomy" id="296591"/>
    <lineage>
        <taxon>Bacteria</taxon>
        <taxon>Pseudomonadati</taxon>
        <taxon>Pseudomonadota</taxon>
        <taxon>Betaproteobacteria</taxon>
        <taxon>Burkholderiales</taxon>
        <taxon>Comamonadaceae</taxon>
        <taxon>Polaromonas</taxon>
    </lineage>
</organism>